<protein>
    <recommendedName>
        <fullName evidence="1">4-hydroxy-3-methylbut-2-en-1-yl diphosphate synthase (flavodoxin)</fullName>
        <ecNumber evidence="1">1.17.7.3</ecNumber>
    </recommendedName>
    <alternativeName>
        <fullName evidence="1">1-hydroxy-2-methyl-2-(E)-butenyl 4-diphosphate synthase</fullName>
    </alternativeName>
</protein>
<proteinExistence type="inferred from homology"/>
<organism>
    <name type="scientific">Listeria monocytogenes serotype 4b (strain CLIP80459)</name>
    <dbReference type="NCBI Taxonomy" id="568819"/>
    <lineage>
        <taxon>Bacteria</taxon>
        <taxon>Bacillati</taxon>
        <taxon>Bacillota</taxon>
        <taxon>Bacilli</taxon>
        <taxon>Bacillales</taxon>
        <taxon>Listeriaceae</taxon>
        <taxon>Listeria</taxon>
    </lineage>
</organism>
<evidence type="ECO:0000255" key="1">
    <source>
        <dbReference type="HAMAP-Rule" id="MF_00159"/>
    </source>
</evidence>
<sequence>MNERIFRENTRPVQVGNLTIGGSEELTIQSMTTTKTHDVEATVAEIHRLEEVGCQIVRVACPDERAANALSAIKKRIHIPLVADIHFDYRLALKAIDAGVDKIRINPGNIGRRDRVEKVVNAAKAKNIPIRIGVNAGSLEKKIIQKYGYPTAEGMVESALDHIKILEDLDFYDIIVSLKASDVNLAIEAYDKASRAFNYPLHLGITESGTQFAGGIKSAAGLGAILSLGIGNTLRVSLSADPVEEIKVAREVLKSFGLSSNAAMLISCPTCGRIEIDLIRIANEVENYIATIKAPIKVAVLGCAVNGPGEAREADIGIAGSNGEGLLFRHGKIIRKVPEAIMVEELKKEIDILAEEYFEKKTDLESLR</sequence>
<accession>C1L2Z7</accession>
<dbReference type="EC" id="1.17.7.3" evidence="1"/>
<dbReference type="EMBL" id="FM242711">
    <property type="protein sequence ID" value="CAS05213.1"/>
    <property type="molecule type" value="Genomic_DNA"/>
</dbReference>
<dbReference type="RefSeq" id="WP_012681295.1">
    <property type="nucleotide sequence ID" value="NC_012488.1"/>
</dbReference>
<dbReference type="SMR" id="C1L2Z7"/>
<dbReference type="KEGG" id="lmc:Lm4b_01451"/>
<dbReference type="HOGENOM" id="CLU_042258_0_0_9"/>
<dbReference type="UniPathway" id="UPA00056">
    <property type="reaction ID" value="UER00096"/>
</dbReference>
<dbReference type="GO" id="GO:0051539">
    <property type="term" value="F:4 iron, 4 sulfur cluster binding"/>
    <property type="evidence" value="ECO:0007669"/>
    <property type="project" value="UniProtKB-UniRule"/>
</dbReference>
<dbReference type="GO" id="GO:0046429">
    <property type="term" value="F:4-hydroxy-3-methylbut-2-en-1-yl diphosphate synthase activity (ferredoxin)"/>
    <property type="evidence" value="ECO:0007669"/>
    <property type="project" value="UniProtKB-UniRule"/>
</dbReference>
<dbReference type="GO" id="GO:0141197">
    <property type="term" value="F:4-hydroxy-3-methylbut-2-enyl-diphosphate synthase activity (flavodoxin)"/>
    <property type="evidence" value="ECO:0007669"/>
    <property type="project" value="UniProtKB-EC"/>
</dbReference>
<dbReference type="GO" id="GO:0005506">
    <property type="term" value="F:iron ion binding"/>
    <property type="evidence" value="ECO:0007669"/>
    <property type="project" value="InterPro"/>
</dbReference>
<dbReference type="GO" id="GO:0019288">
    <property type="term" value="P:isopentenyl diphosphate biosynthetic process, methylerythritol 4-phosphate pathway"/>
    <property type="evidence" value="ECO:0007669"/>
    <property type="project" value="UniProtKB-UniRule"/>
</dbReference>
<dbReference type="GO" id="GO:0016114">
    <property type="term" value="P:terpenoid biosynthetic process"/>
    <property type="evidence" value="ECO:0007669"/>
    <property type="project" value="InterPro"/>
</dbReference>
<dbReference type="FunFam" id="3.20.20.20:FF:000001">
    <property type="entry name" value="4-hydroxy-3-methylbut-2-en-1-yl diphosphate synthase (flavodoxin)"/>
    <property type="match status" value="1"/>
</dbReference>
<dbReference type="FunFam" id="3.30.413.10:FF:000005">
    <property type="entry name" value="4-hydroxy-3-methylbut-2-en-1-yl diphosphate synthase (flavodoxin)"/>
    <property type="match status" value="1"/>
</dbReference>
<dbReference type="Gene3D" id="3.20.20.20">
    <property type="entry name" value="Dihydropteroate synthase-like"/>
    <property type="match status" value="1"/>
</dbReference>
<dbReference type="Gene3D" id="3.30.413.10">
    <property type="entry name" value="Sulfite Reductase Hemoprotein, domain 1"/>
    <property type="match status" value="1"/>
</dbReference>
<dbReference type="HAMAP" id="MF_00159">
    <property type="entry name" value="IspG"/>
    <property type="match status" value="1"/>
</dbReference>
<dbReference type="InterPro" id="IPR011005">
    <property type="entry name" value="Dihydropteroate_synth-like_sf"/>
</dbReference>
<dbReference type="InterPro" id="IPR016425">
    <property type="entry name" value="IspG_bac"/>
</dbReference>
<dbReference type="InterPro" id="IPR004588">
    <property type="entry name" value="IspG_bac-typ"/>
</dbReference>
<dbReference type="InterPro" id="IPR045854">
    <property type="entry name" value="NO2/SO3_Rdtase_4Fe4S_sf"/>
</dbReference>
<dbReference type="NCBIfam" id="TIGR00612">
    <property type="entry name" value="ispG_gcpE"/>
    <property type="match status" value="1"/>
</dbReference>
<dbReference type="NCBIfam" id="NF001540">
    <property type="entry name" value="PRK00366.1"/>
    <property type="match status" value="1"/>
</dbReference>
<dbReference type="PANTHER" id="PTHR30454">
    <property type="entry name" value="4-HYDROXY-3-METHYLBUT-2-EN-1-YL DIPHOSPHATE SYNTHASE"/>
    <property type="match status" value="1"/>
</dbReference>
<dbReference type="PANTHER" id="PTHR30454:SF0">
    <property type="entry name" value="4-HYDROXY-3-METHYLBUT-2-EN-1-YL DIPHOSPHATE SYNTHASE (FERREDOXIN), CHLOROPLASTIC"/>
    <property type="match status" value="1"/>
</dbReference>
<dbReference type="Pfam" id="PF04551">
    <property type="entry name" value="GcpE"/>
    <property type="match status" value="1"/>
</dbReference>
<dbReference type="PIRSF" id="PIRSF004640">
    <property type="entry name" value="IspG"/>
    <property type="match status" value="1"/>
</dbReference>
<dbReference type="SUPFAM" id="SSF51717">
    <property type="entry name" value="Dihydropteroate synthetase-like"/>
    <property type="match status" value="1"/>
</dbReference>
<dbReference type="SUPFAM" id="SSF56014">
    <property type="entry name" value="Nitrite and sulphite reductase 4Fe-4S domain-like"/>
    <property type="match status" value="1"/>
</dbReference>
<name>ISPG_LISMC</name>
<feature type="chain" id="PRO_1000203507" description="4-hydroxy-3-methylbut-2-en-1-yl diphosphate synthase (flavodoxin)">
    <location>
        <begin position="1"/>
        <end position="368"/>
    </location>
</feature>
<feature type="binding site" evidence="1">
    <location>
        <position position="268"/>
    </location>
    <ligand>
        <name>[4Fe-4S] cluster</name>
        <dbReference type="ChEBI" id="CHEBI:49883"/>
    </ligand>
</feature>
<feature type="binding site" evidence="1">
    <location>
        <position position="271"/>
    </location>
    <ligand>
        <name>[4Fe-4S] cluster</name>
        <dbReference type="ChEBI" id="CHEBI:49883"/>
    </ligand>
</feature>
<feature type="binding site" evidence="1">
    <location>
        <position position="303"/>
    </location>
    <ligand>
        <name>[4Fe-4S] cluster</name>
        <dbReference type="ChEBI" id="CHEBI:49883"/>
    </ligand>
</feature>
<feature type="binding site" evidence="1">
    <location>
        <position position="310"/>
    </location>
    <ligand>
        <name>[4Fe-4S] cluster</name>
        <dbReference type="ChEBI" id="CHEBI:49883"/>
    </ligand>
</feature>
<comment type="function">
    <text evidence="1">Converts 2C-methyl-D-erythritol 2,4-cyclodiphosphate (ME-2,4cPP) into 1-hydroxy-2-methyl-2-(E)-butenyl 4-diphosphate.</text>
</comment>
<comment type="catalytic activity">
    <reaction evidence="1">
        <text>(2E)-4-hydroxy-3-methylbut-2-enyl diphosphate + oxidized [flavodoxin] + H2O + 2 H(+) = 2-C-methyl-D-erythritol 2,4-cyclic diphosphate + reduced [flavodoxin]</text>
        <dbReference type="Rhea" id="RHEA:43604"/>
        <dbReference type="Rhea" id="RHEA-COMP:10622"/>
        <dbReference type="Rhea" id="RHEA-COMP:10623"/>
        <dbReference type="ChEBI" id="CHEBI:15377"/>
        <dbReference type="ChEBI" id="CHEBI:15378"/>
        <dbReference type="ChEBI" id="CHEBI:57618"/>
        <dbReference type="ChEBI" id="CHEBI:58210"/>
        <dbReference type="ChEBI" id="CHEBI:58483"/>
        <dbReference type="ChEBI" id="CHEBI:128753"/>
        <dbReference type="EC" id="1.17.7.3"/>
    </reaction>
</comment>
<comment type="cofactor">
    <cofactor evidence="1">
        <name>[4Fe-4S] cluster</name>
        <dbReference type="ChEBI" id="CHEBI:49883"/>
    </cofactor>
    <text evidence="1">Binds 1 [4Fe-4S] cluster.</text>
</comment>
<comment type="pathway">
    <text evidence="1">Isoprenoid biosynthesis; isopentenyl diphosphate biosynthesis via DXP pathway; isopentenyl diphosphate from 1-deoxy-D-xylulose 5-phosphate: step 5/6.</text>
</comment>
<comment type="similarity">
    <text evidence="1">Belongs to the IspG family.</text>
</comment>
<reference key="1">
    <citation type="journal article" date="2012" name="BMC Genomics">
        <title>Comparative genomics and transcriptomics of lineages I, II, and III strains of Listeria monocytogenes.</title>
        <authorList>
            <person name="Hain T."/>
            <person name="Ghai R."/>
            <person name="Billion A."/>
            <person name="Kuenne C.T."/>
            <person name="Steinweg C."/>
            <person name="Izar B."/>
            <person name="Mohamed W."/>
            <person name="Mraheil M."/>
            <person name="Domann E."/>
            <person name="Schaffrath S."/>
            <person name="Karst U."/>
            <person name="Goesmann A."/>
            <person name="Oehm S."/>
            <person name="Puhler A."/>
            <person name="Merkl R."/>
            <person name="Vorwerk S."/>
            <person name="Glaser P."/>
            <person name="Garrido P."/>
            <person name="Rusniok C."/>
            <person name="Buchrieser C."/>
            <person name="Goebel W."/>
            <person name="Chakraborty T."/>
        </authorList>
    </citation>
    <scope>NUCLEOTIDE SEQUENCE [LARGE SCALE GENOMIC DNA]</scope>
    <source>
        <strain>CLIP80459</strain>
    </source>
</reference>
<gene>
    <name evidence="1" type="primary">ispG</name>
    <name type="ordered locus">Lm4b_01451</name>
</gene>
<keyword id="KW-0004">4Fe-4S</keyword>
<keyword id="KW-0408">Iron</keyword>
<keyword id="KW-0411">Iron-sulfur</keyword>
<keyword id="KW-0414">Isoprene biosynthesis</keyword>
<keyword id="KW-0479">Metal-binding</keyword>
<keyword id="KW-0560">Oxidoreductase</keyword>